<protein>
    <recommendedName>
        <fullName evidence="1">Malate dehydrogenase</fullName>
        <ecNumber evidence="1">1.1.1.37</ecNumber>
    </recommendedName>
</protein>
<evidence type="ECO:0000255" key="1">
    <source>
        <dbReference type="HAMAP-Rule" id="MF_01517"/>
    </source>
</evidence>
<accession>B4EFB0</accession>
<reference key="1">
    <citation type="journal article" date="2009" name="J. Bacteriol.">
        <title>The genome of Burkholderia cenocepacia J2315, an epidemic pathogen of cystic fibrosis patients.</title>
        <authorList>
            <person name="Holden M.T."/>
            <person name="Seth-Smith H.M."/>
            <person name="Crossman L.C."/>
            <person name="Sebaihia M."/>
            <person name="Bentley S.D."/>
            <person name="Cerdeno-Tarraga A.M."/>
            <person name="Thomson N.R."/>
            <person name="Bason N."/>
            <person name="Quail M.A."/>
            <person name="Sharp S."/>
            <person name="Cherevach I."/>
            <person name="Churcher C."/>
            <person name="Goodhead I."/>
            <person name="Hauser H."/>
            <person name="Holroyd N."/>
            <person name="Mungall K."/>
            <person name="Scott P."/>
            <person name="Walker D."/>
            <person name="White B."/>
            <person name="Rose H."/>
            <person name="Iversen P."/>
            <person name="Mil-Homens D."/>
            <person name="Rocha E.P."/>
            <person name="Fialho A.M."/>
            <person name="Baldwin A."/>
            <person name="Dowson C."/>
            <person name="Barrell B.G."/>
            <person name="Govan J.R."/>
            <person name="Vandamme P."/>
            <person name="Hart C.A."/>
            <person name="Mahenthiralingam E."/>
            <person name="Parkhill J."/>
        </authorList>
    </citation>
    <scope>NUCLEOTIDE SEQUENCE [LARGE SCALE GENOMIC DNA]</scope>
    <source>
        <strain>ATCC BAA-245 / DSM 16553 / LMG 16656 / NCTC 13227 / J2315 / CF5610</strain>
    </source>
</reference>
<comment type="function">
    <text evidence="1">Catalyzes the reversible oxidation of malate to oxaloacetate.</text>
</comment>
<comment type="catalytic activity">
    <reaction evidence="1">
        <text>(S)-malate + NAD(+) = oxaloacetate + NADH + H(+)</text>
        <dbReference type="Rhea" id="RHEA:21432"/>
        <dbReference type="ChEBI" id="CHEBI:15378"/>
        <dbReference type="ChEBI" id="CHEBI:15589"/>
        <dbReference type="ChEBI" id="CHEBI:16452"/>
        <dbReference type="ChEBI" id="CHEBI:57540"/>
        <dbReference type="ChEBI" id="CHEBI:57945"/>
        <dbReference type="EC" id="1.1.1.37"/>
    </reaction>
</comment>
<comment type="similarity">
    <text evidence="1">Belongs to the LDH/MDH superfamily. MDH type 2 family.</text>
</comment>
<name>MDH_BURCJ</name>
<keyword id="KW-0520">NAD</keyword>
<keyword id="KW-0560">Oxidoreductase</keyword>
<keyword id="KW-0816">Tricarboxylic acid cycle</keyword>
<feature type="chain" id="PRO_1000191611" description="Malate dehydrogenase">
    <location>
        <begin position="1"/>
        <end position="328"/>
    </location>
</feature>
<feature type="active site" description="Proton acceptor" evidence="1">
    <location>
        <position position="188"/>
    </location>
</feature>
<feature type="binding site" evidence="1">
    <location>
        <begin position="12"/>
        <end position="18"/>
    </location>
    <ligand>
        <name>NAD(+)</name>
        <dbReference type="ChEBI" id="CHEBI:57540"/>
    </ligand>
</feature>
<feature type="binding site" evidence="1">
    <location>
        <position position="93"/>
    </location>
    <ligand>
        <name>substrate</name>
    </ligand>
</feature>
<feature type="binding site" evidence="1">
    <location>
        <position position="99"/>
    </location>
    <ligand>
        <name>substrate</name>
    </ligand>
</feature>
<feature type="binding site" evidence="1">
    <location>
        <position position="106"/>
    </location>
    <ligand>
        <name>NAD(+)</name>
        <dbReference type="ChEBI" id="CHEBI:57540"/>
    </ligand>
</feature>
<feature type="binding site" evidence="1">
    <location>
        <position position="113"/>
    </location>
    <ligand>
        <name>NAD(+)</name>
        <dbReference type="ChEBI" id="CHEBI:57540"/>
    </ligand>
</feature>
<feature type="binding site" evidence="1">
    <location>
        <begin position="130"/>
        <end position="132"/>
    </location>
    <ligand>
        <name>NAD(+)</name>
        <dbReference type="ChEBI" id="CHEBI:57540"/>
    </ligand>
</feature>
<feature type="binding site" evidence="1">
    <location>
        <position position="132"/>
    </location>
    <ligand>
        <name>substrate</name>
    </ligand>
</feature>
<feature type="binding site" evidence="1">
    <location>
        <position position="163"/>
    </location>
    <ligand>
        <name>substrate</name>
    </ligand>
</feature>
<organism>
    <name type="scientific">Burkholderia cenocepacia (strain ATCC BAA-245 / DSM 16553 / LMG 16656 / NCTC 13227 / J2315 / CF5610)</name>
    <name type="common">Burkholderia cepacia (strain J2315)</name>
    <dbReference type="NCBI Taxonomy" id="216591"/>
    <lineage>
        <taxon>Bacteria</taxon>
        <taxon>Pseudomonadati</taxon>
        <taxon>Pseudomonadota</taxon>
        <taxon>Betaproteobacteria</taxon>
        <taxon>Burkholderiales</taxon>
        <taxon>Burkholderiaceae</taxon>
        <taxon>Burkholderia</taxon>
        <taxon>Burkholderia cepacia complex</taxon>
    </lineage>
</organism>
<sequence length="328" mass="35117">MAKPAKRVAVTGAAGQIAYSLLFRIANGDLLGKDQPVILQLLDLPQAQAAVKGVVMELDDCAFPLLAGVVITDDPKVAFKDADVALLVGARPRSKGMERKDLLSANAEIFTVQGAALNEVASRDVKVLVVGNPANTNAYIAMKSAPDLPKKNFTAMLRLDHNRALSQLAAKSGKPVASIEKLAVWGNHSPTMYPDFRFATAEGESLLKLINDDVWNRDTFIPTVGKRGAAIIEARGLSSAASAANAAIDHVRDWVLGTNGKWVTMGIPSDGSYGIPEDIIYGVPVTCENGEYKRVEGLEIDAFSREKMDGTLAELLEERDGVAHLLKN</sequence>
<proteinExistence type="inferred from homology"/>
<dbReference type="EC" id="1.1.1.37" evidence="1"/>
<dbReference type="EMBL" id="AM747721">
    <property type="protein sequence ID" value="CAR54822.1"/>
    <property type="molecule type" value="Genomic_DNA"/>
</dbReference>
<dbReference type="RefSeq" id="WP_006487742.1">
    <property type="nucleotide sequence ID" value="NC_011001.1"/>
</dbReference>
<dbReference type="SMR" id="B4EFB0"/>
<dbReference type="KEGG" id="bcj:BCAM0965"/>
<dbReference type="eggNOG" id="COG0039">
    <property type="taxonomic scope" value="Bacteria"/>
</dbReference>
<dbReference type="HOGENOM" id="CLU_040727_2_0_4"/>
<dbReference type="BioCyc" id="BCEN216591:G1G1V-4955-MONOMER"/>
<dbReference type="Proteomes" id="UP000001035">
    <property type="component" value="Chromosome 2"/>
</dbReference>
<dbReference type="GO" id="GO:0030060">
    <property type="term" value="F:L-malate dehydrogenase (NAD+) activity"/>
    <property type="evidence" value="ECO:0007669"/>
    <property type="project" value="UniProtKB-UniRule"/>
</dbReference>
<dbReference type="GO" id="GO:0006108">
    <property type="term" value="P:malate metabolic process"/>
    <property type="evidence" value="ECO:0007669"/>
    <property type="project" value="InterPro"/>
</dbReference>
<dbReference type="GO" id="GO:0006099">
    <property type="term" value="P:tricarboxylic acid cycle"/>
    <property type="evidence" value="ECO:0007669"/>
    <property type="project" value="UniProtKB-UniRule"/>
</dbReference>
<dbReference type="CDD" id="cd01338">
    <property type="entry name" value="MDH_chloroplast-like"/>
    <property type="match status" value="1"/>
</dbReference>
<dbReference type="FunFam" id="3.40.50.720:FF:000010">
    <property type="entry name" value="Malate dehydrogenase"/>
    <property type="match status" value="1"/>
</dbReference>
<dbReference type="FunFam" id="3.90.110.10:FF:000002">
    <property type="entry name" value="Malate dehydrogenase"/>
    <property type="match status" value="1"/>
</dbReference>
<dbReference type="Gene3D" id="3.90.110.10">
    <property type="entry name" value="Lactate dehydrogenase/glycoside hydrolase, family 4, C-terminal"/>
    <property type="match status" value="1"/>
</dbReference>
<dbReference type="Gene3D" id="3.40.50.720">
    <property type="entry name" value="NAD(P)-binding Rossmann-like Domain"/>
    <property type="match status" value="1"/>
</dbReference>
<dbReference type="HAMAP" id="MF_01517">
    <property type="entry name" value="Malate_dehydrog_2"/>
    <property type="match status" value="1"/>
</dbReference>
<dbReference type="InterPro" id="IPR001557">
    <property type="entry name" value="L-lactate/malate_DH"/>
</dbReference>
<dbReference type="InterPro" id="IPR022383">
    <property type="entry name" value="Lactate/malate_DH_C"/>
</dbReference>
<dbReference type="InterPro" id="IPR001236">
    <property type="entry name" value="Lactate/malate_DH_N"/>
</dbReference>
<dbReference type="InterPro" id="IPR015955">
    <property type="entry name" value="Lactate_DH/Glyco_Ohase_4_C"/>
</dbReference>
<dbReference type="InterPro" id="IPR010945">
    <property type="entry name" value="Malate_DH_type2"/>
</dbReference>
<dbReference type="InterPro" id="IPR036291">
    <property type="entry name" value="NAD(P)-bd_dom_sf"/>
</dbReference>
<dbReference type="NCBIfam" id="TIGR01759">
    <property type="entry name" value="MalateDH-SF1"/>
    <property type="match status" value="1"/>
</dbReference>
<dbReference type="NCBIfam" id="NF003916">
    <property type="entry name" value="PRK05442.1"/>
    <property type="match status" value="1"/>
</dbReference>
<dbReference type="PANTHER" id="PTHR23382">
    <property type="entry name" value="MALATE DEHYDROGENASE"/>
    <property type="match status" value="1"/>
</dbReference>
<dbReference type="Pfam" id="PF02866">
    <property type="entry name" value="Ldh_1_C"/>
    <property type="match status" value="1"/>
</dbReference>
<dbReference type="Pfam" id="PF00056">
    <property type="entry name" value="Ldh_1_N"/>
    <property type="match status" value="1"/>
</dbReference>
<dbReference type="PIRSF" id="PIRSF000102">
    <property type="entry name" value="Lac_mal_DH"/>
    <property type="match status" value="1"/>
</dbReference>
<dbReference type="SUPFAM" id="SSF56327">
    <property type="entry name" value="LDH C-terminal domain-like"/>
    <property type="match status" value="1"/>
</dbReference>
<dbReference type="SUPFAM" id="SSF51735">
    <property type="entry name" value="NAD(P)-binding Rossmann-fold domains"/>
    <property type="match status" value="1"/>
</dbReference>
<gene>
    <name evidence="1" type="primary">mdh</name>
    <name type="ordered locus">BceJ2315_44200</name>
    <name type="ORF">BCAM0965</name>
</gene>